<comment type="function">
    <text evidence="3 10 13 14">Core subunit of the mitochondrial membrane respiratory chain NADH dehydrogenase (Complex I) which catalyzes electron transfer from NADH through the respiratory chain, using ubiquinone as an electron acceptor (PubMed:22036843, PubMed:28031252, PubMed:30922174). Essential for the catalytic activity of complex I (PubMed:22036843, PubMed:30922174). Essential for the assembly of complex I (By similarity). Redox-sensitive, critical component of the oxygen-sensing pathway in the pulmonary vasculature which plays a key role in acute pulmonary oxygen-sensing and hypoxic pulmonary vasoconstriction (PubMed:30922174). Plays an important role in carotid body sensing of hypoxia (By similarity). Essential for glia-like neural stem and progenitor cell proliferation, differentiation and subsequent oligodendrocyte or neuronal maturation (By similarity).</text>
</comment>
<comment type="catalytic activity">
    <reaction evidence="10 14">
        <text>a ubiquinone + NADH + 5 H(+)(in) = a ubiquinol + NAD(+) + 4 H(+)(out)</text>
        <dbReference type="Rhea" id="RHEA:29091"/>
        <dbReference type="Rhea" id="RHEA-COMP:9565"/>
        <dbReference type="Rhea" id="RHEA-COMP:9566"/>
        <dbReference type="ChEBI" id="CHEBI:15378"/>
        <dbReference type="ChEBI" id="CHEBI:16389"/>
        <dbReference type="ChEBI" id="CHEBI:17976"/>
        <dbReference type="ChEBI" id="CHEBI:57540"/>
        <dbReference type="ChEBI" id="CHEBI:57945"/>
        <dbReference type="EC" id="7.1.1.2"/>
    </reaction>
</comment>
<comment type="cofactor">
    <cofactor>
        <name>[4Fe-4S] cluster</name>
        <dbReference type="ChEBI" id="CHEBI:49883"/>
    </cofactor>
    <text>Binds 1 [4Fe-4S] cluster.</text>
</comment>
<comment type="biophysicochemical properties">
    <kinetics>
        <KM evidence="10">10.2 uM for decylubiquinone</KM>
        <KM evidence="10">55 uM for ubiquinone-1</KM>
    </kinetics>
</comment>
<comment type="subunit">
    <text evidence="3 6 7 8 11">Core subunit of respiratory chain NADH dehydrogenase (Complex I) which is composed of 45 different subunits. Component of the iron-sulfur (IP) fragment of the enzyme (PubMed:12611891). Interacts with NDUFAF3 (PubMed:19463981). Interacts with NDUFAF7 (PubMed:20406883, PubMed:24089531). Interacts with CERS2 (By similarity).</text>
</comment>
<comment type="interaction">
    <interactant intactId="EBI-1224806">
        <id>O75306</id>
    </interactant>
    <interactant intactId="EBI-1224896">
        <id>O75489</id>
        <label>NDUFS3</label>
    </interactant>
    <organismsDiffer>false</organismsDiffer>
    <experiments>12</experiments>
</comment>
<comment type="interaction">
    <interactant intactId="EBI-1224806">
        <id>O75306</id>
    </interactant>
    <interactant intactId="EBI-2804080">
        <id>Q99650</id>
        <label>OSMR</label>
    </interactant>
    <organismsDiffer>false</organismsDiffer>
    <experiments>4</experiments>
</comment>
<comment type="subcellular location">
    <subcellularLocation>
        <location evidence="16 17">Mitochondrion inner membrane</location>
        <topology evidence="2">Peripheral membrane protein</topology>
        <orientation evidence="2">Matrix side</orientation>
    </subcellularLocation>
</comment>
<comment type="alternative products">
    <event type="alternative splicing"/>
    <isoform>
        <id>O75306-1</id>
        <name>1</name>
        <sequence type="displayed"/>
    </isoform>
    <isoform>
        <id>O75306-2</id>
        <name>2</name>
        <sequence type="described" ref="VSP_046466"/>
    </isoform>
</comment>
<comment type="PTM">
    <text evidence="11 12">Dimethylation at Arg-118 by NDUFAF7 takes place after NDUFS2 assembles into the complex I, leading to stabilize the early intermediate complex (PubMed:24089531, PubMed:24838397).</text>
</comment>
<comment type="disease" evidence="5 10">
    <disease id="DI-05405">
        <name>Mitochondrial complex I deficiency, nuclear type 6</name>
        <acronym>MC1DN6</acronym>
        <description>A form of mitochondrial complex I deficiency, the most common biochemical signature of mitochondrial disorders, a group of highly heterogeneous conditions characterized by defective oxidative phosphorylation, which collectively affects 1 in 5-10000 live births. Clinical disorders have variable severity, ranging from lethal neonatal disease to adult-onset neurodegenerative disorders. Phenotypes include macrocephaly with progressive leukodystrophy, non-specific encephalopathy, cardiomyopathy, myopathy, liver disease, Leigh syndrome, Leber hereditary optic neuropathy, and some forms of Parkinson disease. MC1DN6 transmission pattern is consistent with autosomal recessive inheritance.</description>
        <dbReference type="MIM" id="618228"/>
    </disease>
    <text>The disease is caused by variants affecting the gene represented in this entry.</text>
</comment>
<comment type="disease" evidence="13">
    <disease id="DI-06787">
        <name>Leber-like hereditary optic neuropathy, autosomal recessive 2</name>
        <acronym>LHONAR2</acronym>
        <description>An autosomal recessive form of Leber hereditary optic neuropathy, a mitochondrial disease resulting in bilateral painless loss of central vision due to selective degeneration of the retinal ganglion cells and their axons. LHONAR2 is characterized by subacute bilateral or asymmetrical visual loss, optic nerve pseudoedema and peripapillary telangiectasia in the early phase of the disease, and eventual partial recovery in some patients.</description>
        <dbReference type="MIM" id="620569"/>
    </disease>
    <text>The disease is caused by variants affecting the gene represented in this entry.</text>
</comment>
<comment type="similarity">
    <text evidence="15">Belongs to the complex I 49 kDa subunit family.</text>
</comment>
<gene>
    <name type="primary">NDUFS2</name>
</gene>
<reference key="1">
    <citation type="journal article" date="1998" name="Biochem. Biophys. Res. Commun.">
        <title>cDNA sequence and chromosomal localization of the remaining three human nuclear encoded iron sulphur protein (IP) subunits of complex I: the human IP fraction is completed.</title>
        <authorList>
            <person name="Loeffen J."/>
            <person name="van den Heuvel L."/>
            <person name="Smeets R."/>
            <person name="Triepels R."/>
            <person name="Sengers R."/>
            <person name="Trijbels F."/>
            <person name="Smeitink J."/>
        </authorList>
    </citation>
    <scope>NUCLEOTIDE SEQUENCE [MRNA]</scope>
</reference>
<reference key="2">
    <citation type="journal article" date="1998" name="Mamm. Genome">
        <title>Mapping to 1q23 of the human gene (NDUFS2) encoding the 49-kDa subunit of the mitochondrial respiratory complex I and immunodetection of the mature protein in mitochondria.</title>
        <authorList>
            <person name="Procaccio V."/>
            <person name="de Sury R."/>
            <person name="Martinez P."/>
            <person name="Depetris D."/>
            <person name="Rabilloud T."/>
            <person name="Soularue P."/>
            <person name="Lunardi J."/>
            <person name="Issartel J.-P."/>
        </authorList>
    </citation>
    <scope>NUCLEOTIDE SEQUENCE [MRNA]</scope>
    <scope>SUBCELLULAR LOCATION</scope>
</reference>
<reference key="3">
    <citation type="journal article" date="2004" name="Nat. Genet.">
        <title>Complete sequencing and characterization of 21,243 full-length human cDNAs.</title>
        <authorList>
            <person name="Ota T."/>
            <person name="Suzuki Y."/>
            <person name="Nishikawa T."/>
            <person name="Otsuki T."/>
            <person name="Sugiyama T."/>
            <person name="Irie R."/>
            <person name="Wakamatsu A."/>
            <person name="Hayashi K."/>
            <person name="Sato H."/>
            <person name="Nagai K."/>
            <person name="Kimura K."/>
            <person name="Makita H."/>
            <person name="Sekine M."/>
            <person name="Obayashi M."/>
            <person name="Nishi T."/>
            <person name="Shibahara T."/>
            <person name="Tanaka T."/>
            <person name="Ishii S."/>
            <person name="Yamamoto J."/>
            <person name="Saito K."/>
            <person name="Kawai Y."/>
            <person name="Isono Y."/>
            <person name="Nakamura Y."/>
            <person name="Nagahari K."/>
            <person name="Murakami K."/>
            <person name="Yasuda T."/>
            <person name="Iwayanagi T."/>
            <person name="Wagatsuma M."/>
            <person name="Shiratori A."/>
            <person name="Sudo H."/>
            <person name="Hosoiri T."/>
            <person name="Kaku Y."/>
            <person name="Kodaira H."/>
            <person name="Kondo H."/>
            <person name="Sugawara M."/>
            <person name="Takahashi M."/>
            <person name="Kanda K."/>
            <person name="Yokoi T."/>
            <person name="Furuya T."/>
            <person name="Kikkawa E."/>
            <person name="Omura Y."/>
            <person name="Abe K."/>
            <person name="Kamihara K."/>
            <person name="Katsuta N."/>
            <person name="Sato K."/>
            <person name="Tanikawa M."/>
            <person name="Yamazaki M."/>
            <person name="Ninomiya K."/>
            <person name="Ishibashi T."/>
            <person name="Yamashita H."/>
            <person name="Murakawa K."/>
            <person name="Fujimori K."/>
            <person name="Tanai H."/>
            <person name="Kimata M."/>
            <person name="Watanabe M."/>
            <person name="Hiraoka S."/>
            <person name="Chiba Y."/>
            <person name="Ishida S."/>
            <person name="Ono Y."/>
            <person name="Takiguchi S."/>
            <person name="Watanabe S."/>
            <person name="Yosida M."/>
            <person name="Hotuta T."/>
            <person name="Kusano J."/>
            <person name="Kanehori K."/>
            <person name="Takahashi-Fujii A."/>
            <person name="Hara H."/>
            <person name="Tanase T.-O."/>
            <person name="Nomura Y."/>
            <person name="Togiya S."/>
            <person name="Komai F."/>
            <person name="Hara R."/>
            <person name="Takeuchi K."/>
            <person name="Arita M."/>
            <person name="Imose N."/>
            <person name="Musashino K."/>
            <person name="Yuuki H."/>
            <person name="Oshima A."/>
            <person name="Sasaki N."/>
            <person name="Aotsuka S."/>
            <person name="Yoshikawa Y."/>
            <person name="Matsunawa H."/>
            <person name="Ichihara T."/>
            <person name="Shiohata N."/>
            <person name="Sano S."/>
            <person name="Moriya S."/>
            <person name="Momiyama H."/>
            <person name="Satoh N."/>
            <person name="Takami S."/>
            <person name="Terashima Y."/>
            <person name="Suzuki O."/>
            <person name="Nakagawa S."/>
            <person name="Senoh A."/>
            <person name="Mizoguchi H."/>
            <person name="Goto Y."/>
            <person name="Shimizu F."/>
            <person name="Wakebe H."/>
            <person name="Hishigaki H."/>
            <person name="Watanabe T."/>
            <person name="Sugiyama A."/>
            <person name="Takemoto M."/>
            <person name="Kawakami B."/>
            <person name="Yamazaki M."/>
            <person name="Watanabe K."/>
            <person name="Kumagai A."/>
            <person name="Itakura S."/>
            <person name="Fukuzumi Y."/>
            <person name="Fujimori Y."/>
            <person name="Komiyama M."/>
            <person name="Tashiro H."/>
            <person name="Tanigami A."/>
            <person name="Fujiwara T."/>
            <person name="Ono T."/>
            <person name="Yamada K."/>
            <person name="Fujii Y."/>
            <person name="Ozaki K."/>
            <person name="Hirao M."/>
            <person name="Ohmori Y."/>
            <person name="Kawabata A."/>
            <person name="Hikiji T."/>
            <person name="Kobatake N."/>
            <person name="Inagaki H."/>
            <person name="Ikema Y."/>
            <person name="Okamoto S."/>
            <person name="Okitani R."/>
            <person name="Kawakami T."/>
            <person name="Noguchi S."/>
            <person name="Itoh T."/>
            <person name="Shigeta K."/>
            <person name="Senba T."/>
            <person name="Matsumura K."/>
            <person name="Nakajima Y."/>
            <person name="Mizuno T."/>
            <person name="Morinaga M."/>
            <person name="Sasaki M."/>
            <person name="Togashi T."/>
            <person name="Oyama M."/>
            <person name="Hata H."/>
            <person name="Watanabe M."/>
            <person name="Komatsu T."/>
            <person name="Mizushima-Sugano J."/>
            <person name="Satoh T."/>
            <person name="Shirai Y."/>
            <person name="Takahashi Y."/>
            <person name="Nakagawa K."/>
            <person name="Okumura K."/>
            <person name="Nagase T."/>
            <person name="Nomura N."/>
            <person name="Kikuchi H."/>
            <person name="Masuho Y."/>
            <person name="Yamashita R."/>
            <person name="Nakai K."/>
            <person name="Yada T."/>
            <person name="Nakamura Y."/>
            <person name="Ohara O."/>
            <person name="Isogai T."/>
            <person name="Sugano S."/>
        </authorList>
    </citation>
    <scope>NUCLEOTIDE SEQUENCE [LARGE SCALE MRNA]</scope>
</reference>
<reference key="4">
    <citation type="journal article" date="2006" name="Nature">
        <title>The DNA sequence and biological annotation of human chromosome 1.</title>
        <authorList>
            <person name="Gregory S.G."/>
            <person name="Barlow K.F."/>
            <person name="McLay K.E."/>
            <person name="Kaul R."/>
            <person name="Swarbreck D."/>
            <person name="Dunham A."/>
            <person name="Scott C.E."/>
            <person name="Howe K.L."/>
            <person name="Woodfine K."/>
            <person name="Spencer C.C.A."/>
            <person name="Jones M.C."/>
            <person name="Gillson C."/>
            <person name="Searle S."/>
            <person name="Zhou Y."/>
            <person name="Kokocinski F."/>
            <person name="McDonald L."/>
            <person name="Evans R."/>
            <person name="Phillips K."/>
            <person name="Atkinson A."/>
            <person name="Cooper R."/>
            <person name="Jones C."/>
            <person name="Hall R.E."/>
            <person name="Andrews T.D."/>
            <person name="Lloyd C."/>
            <person name="Ainscough R."/>
            <person name="Almeida J.P."/>
            <person name="Ambrose K.D."/>
            <person name="Anderson F."/>
            <person name="Andrew R.W."/>
            <person name="Ashwell R.I.S."/>
            <person name="Aubin K."/>
            <person name="Babbage A.K."/>
            <person name="Bagguley C.L."/>
            <person name="Bailey J."/>
            <person name="Beasley H."/>
            <person name="Bethel G."/>
            <person name="Bird C.P."/>
            <person name="Bray-Allen S."/>
            <person name="Brown J.Y."/>
            <person name="Brown A.J."/>
            <person name="Buckley D."/>
            <person name="Burton J."/>
            <person name="Bye J."/>
            <person name="Carder C."/>
            <person name="Chapman J.C."/>
            <person name="Clark S.Y."/>
            <person name="Clarke G."/>
            <person name="Clee C."/>
            <person name="Cobley V."/>
            <person name="Collier R.E."/>
            <person name="Corby N."/>
            <person name="Coville G.J."/>
            <person name="Davies J."/>
            <person name="Deadman R."/>
            <person name="Dunn M."/>
            <person name="Earthrowl M."/>
            <person name="Ellington A.G."/>
            <person name="Errington H."/>
            <person name="Frankish A."/>
            <person name="Frankland J."/>
            <person name="French L."/>
            <person name="Garner P."/>
            <person name="Garnett J."/>
            <person name="Gay L."/>
            <person name="Ghori M.R.J."/>
            <person name="Gibson R."/>
            <person name="Gilby L.M."/>
            <person name="Gillett W."/>
            <person name="Glithero R.J."/>
            <person name="Grafham D.V."/>
            <person name="Griffiths C."/>
            <person name="Griffiths-Jones S."/>
            <person name="Grocock R."/>
            <person name="Hammond S."/>
            <person name="Harrison E.S.I."/>
            <person name="Hart E."/>
            <person name="Haugen E."/>
            <person name="Heath P.D."/>
            <person name="Holmes S."/>
            <person name="Holt K."/>
            <person name="Howden P.J."/>
            <person name="Hunt A.R."/>
            <person name="Hunt S.E."/>
            <person name="Hunter G."/>
            <person name="Isherwood J."/>
            <person name="James R."/>
            <person name="Johnson C."/>
            <person name="Johnson D."/>
            <person name="Joy A."/>
            <person name="Kay M."/>
            <person name="Kershaw J.K."/>
            <person name="Kibukawa M."/>
            <person name="Kimberley A.M."/>
            <person name="King A."/>
            <person name="Knights A.J."/>
            <person name="Lad H."/>
            <person name="Laird G."/>
            <person name="Lawlor S."/>
            <person name="Leongamornlert D.A."/>
            <person name="Lloyd D.M."/>
            <person name="Loveland J."/>
            <person name="Lovell J."/>
            <person name="Lush M.J."/>
            <person name="Lyne R."/>
            <person name="Martin S."/>
            <person name="Mashreghi-Mohammadi M."/>
            <person name="Matthews L."/>
            <person name="Matthews N.S.W."/>
            <person name="McLaren S."/>
            <person name="Milne S."/>
            <person name="Mistry S."/>
            <person name="Moore M.J.F."/>
            <person name="Nickerson T."/>
            <person name="O'Dell C.N."/>
            <person name="Oliver K."/>
            <person name="Palmeiri A."/>
            <person name="Palmer S.A."/>
            <person name="Parker A."/>
            <person name="Patel D."/>
            <person name="Pearce A.V."/>
            <person name="Peck A.I."/>
            <person name="Pelan S."/>
            <person name="Phelps K."/>
            <person name="Phillimore B.J."/>
            <person name="Plumb R."/>
            <person name="Rajan J."/>
            <person name="Raymond C."/>
            <person name="Rouse G."/>
            <person name="Saenphimmachak C."/>
            <person name="Sehra H.K."/>
            <person name="Sheridan E."/>
            <person name="Shownkeen R."/>
            <person name="Sims S."/>
            <person name="Skuce C.D."/>
            <person name="Smith M."/>
            <person name="Steward C."/>
            <person name="Subramanian S."/>
            <person name="Sycamore N."/>
            <person name="Tracey A."/>
            <person name="Tromans A."/>
            <person name="Van Helmond Z."/>
            <person name="Wall M."/>
            <person name="Wallis J.M."/>
            <person name="White S."/>
            <person name="Whitehead S.L."/>
            <person name="Wilkinson J.E."/>
            <person name="Willey D.L."/>
            <person name="Williams H."/>
            <person name="Wilming L."/>
            <person name="Wray P.W."/>
            <person name="Wu Z."/>
            <person name="Coulson A."/>
            <person name="Vaudin M."/>
            <person name="Sulston J.E."/>
            <person name="Durbin R.M."/>
            <person name="Hubbard T."/>
            <person name="Wooster R."/>
            <person name="Dunham I."/>
            <person name="Carter N.P."/>
            <person name="McVean G."/>
            <person name="Ross M.T."/>
            <person name="Harrow J."/>
            <person name="Olson M.V."/>
            <person name="Beck S."/>
            <person name="Rogers J."/>
            <person name="Bentley D.R."/>
        </authorList>
    </citation>
    <scope>NUCLEOTIDE SEQUENCE [LARGE SCALE GENOMIC DNA]</scope>
</reference>
<reference key="5">
    <citation type="submission" date="2005-09" db="EMBL/GenBank/DDBJ databases">
        <authorList>
            <person name="Mural R.J."/>
            <person name="Istrail S."/>
            <person name="Sutton G.G."/>
            <person name="Florea L."/>
            <person name="Halpern A.L."/>
            <person name="Mobarry C.M."/>
            <person name="Lippert R."/>
            <person name="Walenz B."/>
            <person name="Shatkay H."/>
            <person name="Dew I."/>
            <person name="Miller J.R."/>
            <person name="Flanigan M.J."/>
            <person name="Edwards N.J."/>
            <person name="Bolanos R."/>
            <person name="Fasulo D."/>
            <person name="Halldorsson B.V."/>
            <person name="Hannenhalli S."/>
            <person name="Turner R."/>
            <person name="Yooseph S."/>
            <person name="Lu F."/>
            <person name="Nusskern D.R."/>
            <person name="Shue B.C."/>
            <person name="Zheng X.H."/>
            <person name="Zhong F."/>
            <person name="Delcher A.L."/>
            <person name="Huson D.H."/>
            <person name="Kravitz S.A."/>
            <person name="Mouchard L."/>
            <person name="Reinert K."/>
            <person name="Remington K.A."/>
            <person name="Clark A.G."/>
            <person name="Waterman M.S."/>
            <person name="Eichler E.E."/>
            <person name="Adams M.D."/>
            <person name="Hunkapiller M.W."/>
            <person name="Myers E.W."/>
            <person name="Venter J.C."/>
        </authorList>
    </citation>
    <scope>NUCLEOTIDE SEQUENCE [LARGE SCALE GENOMIC DNA]</scope>
</reference>
<reference key="6">
    <citation type="journal article" date="2004" name="Genome Res.">
        <title>The status, quality, and expansion of the NIH full-length cDNA project: the Mammalian Gene Collection (MGC).</title>
        <authorList>
            <consortium name="The MGC Project Team"/>
        </authorList>
    </citation>
    <scope>NUCLEOTIDE SEQUENCE [LARGE SCALE MRNA]</scope>
    <source>
        <tissue>Muscle</tissue>
        <tissue>Placenta</tissue>
    </source>
</reference>
<reference key="7">
    <citation type="journal article" date="2003" name="J. Biol. Chem.">
        <title>The subunit composition of the human NADH dehydrogenase obtained by rapid one-step immunopurification.</title>
        <authorList>
            <person name="Murray J."/>
            <person name="Zhang B."/>
            <person name="Taylor S.W."/>
            <person name="Oglesbee D."/>
            <person name="Fahy E."/>
            <person name="Marusich M.F."/>
            <person name="Ghosh S.S."/>
            <person name="Capaldi R.A."/>
        </authorList>
    </citation>
    <scope>IDENTIFICATION IN THE NADH-UBIQUINONE OXIDOREDUCTASE COMPLEX</scope>
    <scope>IDENTIFICATION BY MASS SPECTROMETRY</scope>
    <scope>SUBCELLULAR LOCATION</scope>
</reference>
<reference key="8">
    <citation type="journal article" date="2009" name="Am. J. Hum. Genet.">
        <title>Mutations in NDUFAF3 (C3ORF60), encoding an NDUFAF4 (C6ORF66)-interacting complex I assembly protein, cause fatal neonatal mitochondrial disease.</title>
        <authorList>
            <person name="Saada A."/>
            <person name="Vogel R.O."/>
            <person name="Hoefs S.J."/>
            <person name="van den Brand M.A."/>
            <person name="Wessels H.J."/>
            <person name="Willems P.H."/>
            <person name="Venselaar H."/>
            <person name="Shaag A."/>
            <person name="Barghuti F."/>
            <person name="Reish O."/>
            <person name="Shohat M."/>
            <person name="Huynen M.A."/>
            <person name="Smeitink J.A.M."/>
            <person name="van den Heuvel L.P."/>
            <person name="Nijtmans L.G."/>
        </authorList>
    </citation>
    <scope>INTERACTION WITH NDUFAF3</scope>
</reference>
<reference key="9">
    <citation type="journal article" date="2010" name="J. Cell Sci.">
        <title>MidA is a putative methyltransferase that is required for mitochondrial complex I function.</title>
        <authorList>
            <person name="Carilla-Latorre S."/>
            <person name="Gallardo M.E."/>
            <person name="Annesley S.J."/>
            <person name="Calvo-Garrido J."/>
            <person name="Grana O."/>
            <person name="Accari S.L."/>
            <person name="Smith P.K."/>
            <person name="Valencia A."/>
            <person name="Garesse R."/>
            <person name="Fisher P.R."/>
            <person name="Escalante R."/>
        </authorList>
    </citation>
    <scope>INTERACTION WITH NDUFAF7</scope>
</reference>
<reference key="10">
    <citation type="journal article" date="2011" name="BMC Syst. Biol.">
        <title>Initial characterization of the human central proteome.</title>
        <authorList>
            <person name="Burkard T.R."/>
            <person name="Planyavsky M."/>
            <person name="Kaupe I."/>
            <person name="Breitwieser F.P."/>
            <person name="Buerckstuemmer T."/>
            <person name="Bennett K.L."/>
            <person name="Superti-Furga G."/>
            <person name="Colinge J."/>
        </authorList>
    </citation>
    <scope>IDENTIFICATION BY MASS SPECTROMETRY [LARGE SCALE ANALYSIS]</scope>
</reference>
<reference key="11">
    <citation type="journal article" date="2013" name="J. Biol. Chem.">
        <title>NDUFAF7 methylates arginine 85 in the NDUFS2 subunit of human complex I.</title>
        <authorList>
            <person name="Rhein V.F."/>
            <person name="Carroll J."/>
            <person name="Ding S."/>
            <person name="Fearnley I.M."/>
            <person name="Walker J.E."/>
        </authorList>
    </citation>
    <scope>METHYLATION AT ARG-118</scope>
    <scope>INTERACTION WITH NDUFAF7</scope>
</reference>
<reference key="12">
    <citation type="journal article" date="2014" name="Hum. Mol. Genet.">
        <title>The arginine methyltransferase NDUFAF7 is essential for complex I assembly and early vertebrate embryogenesis.</title>
        <authorList>
            <person name="Zurita Rendon O."/>
            <person name="Silva Neiva L."/>
            <person name="Sasarman F."/>
            <person name="Shoubridge E.A."/>
        </authorList>
    </citation>
    <scope>METHYLATION AT ARG-118</scope>
</reference>
<reference key="13">
    <citation type="journal article" date="2014" name="J. Proteomics">
        <title>An enzyme assisted RP-RPLC approach for in-depth analysis of human liver phosphoproteome.</title>
        <authorList>
            <person name="Bian Y."/>
            <person name="Song C."/>
            <person name="Cheng K."/>
            <person name="Dong M."/>
            <person name="Wang F."/>
            <person name="Huang J."/>
            <person name="Sun D."/>
            <person name="Wang L."/>
            <person name="Ye M."/>
            <person name="Zou H."/>
        </authorList>
    </citation>
    <scope>IDENTIFICATION BY MASS SPECTROMETRY [LARGE SCALE ANALYSIS]</scope>
    <source>
        <tissue>Liver</tissue>
    </source>
</reference>
<reference key="14">
    <citation type="journal article" date="2015" name="Proteomics">
        <title>N-terminome analysis of the human mitochondrial proteome.</title>
        <authorList>
            <person name="Vaca Jacome A.S."/>
            <person name="Rabilloud T."/>
            <person name="Schaeffer-Reiss C."/>
            <person name="Rompais M."/>
            <person name="Ayoub D."/>
            <person name="Lane L."/>
            <person name="Bairoch A."/>
            <person name="Van Dorsselaer A."/>
            <person name="Carapito C."/>
        </authorList>
    </citation>
    <scope>IDENTIFICATION BY MASS SPECTROMETRY [LARGE SCALE ANALYSIS]</scope>
</reference>
<reference key="15">
    <citation type="journal article" date="2017" name="J. Med. Genet.">
        <title>Compound heterozygosity for severe and hypomorphic NDUFS2 mutations cause non-syndromic LHON-like optic neuropathy.</title>
        <authorList>
            <person name="Gerber S."/>
            <person name="Ding M.G."/>
            <person name="Gerard X."/>
            <person name="Zwicker K."/>
            <person name="Zanlonghi X."/>
            <person name="Rio M."/>
            <person name="Serre V."/>
            <person name="Hanein S."/>
            <person name="Munnich A."/>
            <person name="Rotig A."/>
            <person name="Bianchi L."/>
            <person name="Amati-Bonneau P."/>
            <person name="Elpeleg O."/>
            <person name="Kaplan J."/>
            <person name="Brandt U."/>
            <person name="Rozet J.M."/>
        </authorList>
    </citation>
    <scope>INVOLVEMENT IN LHONAR2</scope>
    <scope>VARIANTS LHONAR2 CYS-53 AND CYS-308</scope>
    <scope>CHARACTERIZATION OF VARIANTS LHONAR2 CYS-53 AND CYS-308</scope>
    <scope>FUNCTION</scope>
</reference>
<reference key="16">
    <citation type="journal article" date="2019" name="Circ. Res.">
        <title>Ndufs2, a Core Subunit of Mitochondrial Complex I, Is Essential for Acute Oxygen-Sensing and Hypoxic Pulmonary Vasoconstriction.</title>
        <authorList>
            <person name="Dunham-Snary K.J."/>
            <person name="Wu D."/>
            <person name="Potus F."/>
            <person name="Sykes E.A."/>
            <person name="Mewburn J.D."/>
            <person name="Charles R.L."/>
            <person name="Eaton P."/>
            <person name="Sultanian R.A."/>
            <person name="Archer S.L."/>
        </authorList>
    </citation>
    <scope>FUNCTION</scope>
    <scope>CATALYTIC ACTIVITY</scope>
</reference>
<reference key="17">
    <citation type="journal article" date="2001" name="Ann. Neurol.">
        <title>Mutations in the complex I NDUFS2 gene of patients with cardiomyopathy and encephalomyopathy.</title>
        <authorList>
            <person name="Loeffen J."/>
            <person name="Elpeleg O."/>
            <person name="Smeitink J."/>
            <person name="Smeets R."/>
            <person name="Stoeckler-Ipsiroglu S."/>
            <person name="Mandel H."/>
            <person name="Sengers R."/>
            <person name="Trijbels F."/>
            <person name="van den Heuvel L."/>
        </authorList>
    </citation>
    <scope>INVOLVEMENT IN MC1DN6</scope>
    <scope>VARIANTS MC1DN6 GLN-228; GLN-229 AND PRO-413</scope>
</reference>
<reference key="18">
    <citation type="journal article" date="2010" name="Nat. Genet.">
        <title>Exome sequencing identifies ACAD9 mutations as a cause of complex I deficiency.</title>
        <authorList>
            <person name="Haack T.B."/>
            <person name="Danhauser K."/>
            <person name="Haberberger B."/>
            <person name="Hoser J."/>
            <person name="Strecker V."/>
            <person name="Boehm D."/>
            <person name="Uziel G."/>
            <person name="Lamantea E."/>
            <person name="Invernizzi F."/>
            <person name="Poulton J."/>
            <person name="Rolinski B."/>
            <person name="Iuso A."/>
            <person name="Biskup S."/>
            <person name="Schmidt T."/>
            <person name="Mewes H.W."/>
            <person name="Wittig I."/>
            <person name="Meitinger T."/>
            <person name="Zeviani M."/>
            <person name="Prokisch H."/>
        </authorList>
    </citation>
    <scope>VARIANT VAL-224</scope>
</reference>
<reference key="19">
    <citation type="journal article" date="2012" name="Biochim. Biophys. Acta">
        <title>A catalytic defect in mitochondrial respiratory chain complex I due to a mutation in NDUFS2 in a patient with Leigh syndrome.</title>
        <authorList>
            <person name="Ngu L.H."/>
            <person name="Nijtmans L.G."/>
            <person name="Distelmaier F."/>
            <person name="Venselaar H."/>
            <person name="van Emst-de Vries S.E."/>
            <person name="van den Brand M.A."/>
            <person name="Stoltenborg B.J."/>
            <person name="Wintjes L.T."/>
            <person name="Willems P.H."/>
            <person name="van den Heuvel L.P."/>
            <person name="Smeitink J.A."/>
            <person name="Rodenburg R.J."/>
        </authorList>
    </citation>
    <scope>VARIANT MC1DN6 ASN-446</scope>
    <scope>CHARACTERIZATION OF VARIANT MC1DN6 ASN-446</scope>
    <scope>FUNCTION</scope>
    <scope>CATALYTIC ACTIVITY</scope>
    <scope>BIOPHYSICOCHEMICAL PROPERTIES</scope>
</reference>
<keyword id="KW-0002">3D-structure</keyword>
<keyword id="KW-0004">4Fe-4S</keyword>
<keyword id="KW-0007">Acetylation</keyword>
<keyword id="KW-0025">Alternative splicing</keyword>
<keyword id="KW-0225">Disease variant</keyword>
<keyword id="KW-0249">Electron transport</keyword>
<keyword id="KW-0408">Iron</keyword>
<keyword id="KW-0411">Iron-sulfur</keyword>
<keyword id="KW-0429">Leber hereditary optic neuropathy</keyword>
<keyword id="KW-0472">Membrane</keyword>
<keyword id="KW-0479">Metal-binding</keyword>
<keyword id="KW-0488">Methylation</keyword>
<keyword id="KW-0496">Mitochondrion</keyword>
<keyword id="KW-0999">Mitochondrion inner membrane</keyword>
<keyword id="KW-0520">NAD</keyword>
<keyword id="KW-0560">Oxidoreductase</keyword>
<keyword id="KW-1274">Primary mitochondrial disease</keyword>
<keyword id="KW-1267">Proteomics identification</keyword>
<keyword id="KW-1185">Reference proteome</keyword>
<keyword id="KW-0679">Respiratory chain</keyword>
<keyword id="KW-0809">Transit peptide</keyword>
<keyword id="KW-1278">Translocase</keyword>
<keyword id="KW-0813">Transport</keyword>
<keyword id="KW-0830">Ubiquinone</keyword>
<proteinExistence type="evidence at protein level"/>
<name>NDUS2_HUMAN</name>
<sequence length="463" mass="52546">MAALRALCGFRGVAAQVLRPGAGVRLPIQPSRGVRQWQPDVEWAQQFGGAVMYPSKETAHWKPPPWNDVDPPKDTIVKNITLNFGPQHPAAHGVLRLVMELSGEMVRKCDPHIGLLHRGTEKLIEYKTYLQALPYFDRLDYVSMMCNEQAYSLAVEKLLNIRPPPRAQWIRVLFGEITRLLNHIMAVTTHALDLGAMTPFFWLFEEREKMFEFYERVSGARMHAAYIRPGGVHQDLPLGLMDDIYQFSKNFSLRLDELEELLTNNRIWRNRTIDIGVVTAEEALNYGFSGVMLRGSGIQWDLRKTQPYDVYDQVEFDVPVGSRGDCYDRYLCRVEEMRQSLRIIAQCLNKMPPGEIKVDDAKVSPPKRAEMKTSMESLIHHFKLYTEGYQVPPGATYTAIEAPKGEFGVYLVSDGSSRPYRCKIKAPGFAHLAGLDKMSKGHMLADVVAIIGTQDIVFGEVDR</sequence>
<protein>
    <recommendedName>
        <fullName>NADH dehydrogenase [ubiquinone] iron-sulfur protein 2, mitochondrial</fullName>
        <ecNumber evidence="10 14">7.1.1.2</ecNumber>
    </recommendedName>
    <alternativeName>
        <fullName>Complex I-49kD</fullName>
        <shortName>CI-49kD</shortName>
    </alternativeName>
    <alternativeName>
        <fullName>NADH-ubiquinone oxidoreductase 49 kDa subunit</fullName>
    </alternativeName>
</protein>
<dbReference type="EC" id="7.1.1.2" evidence="10 14"/>
<dbReference type="EMBL" id="AF050640">
    <property type="protein sequence ID" value="AAC27453.1"/>
    <property type="molecule type" value="mRNA"/>
</dbReference>
<dbReference type="EMBL" id="AF013160">
    <property type="protein sequence ID" value="AAC34362.1"/>
    <property type="molecule type" value="mRNA"/>
</dbReference>
<dbReference type="EMBL" id="AK314807">
    <property type="status" value="NOT_ANNOTATED_CDS"/>
    <property type="molecule type" value="mRNA"/>
</dbReference>
<dbReference type="EMBL" id="AL590714">
    <property type="status" value="NOT_ANNOTATED_CDS"/>
    <property type="molecule type" value="Genomic_DNA"/>
</dbReference>
<dbReference type="EMBL" id="CH471121">
    <property type="protein sequence ID" value="EAW52625.1"/>
    <property type="molecule type" value="Genomic_DNA"/>
</dbReference>
<dbReference type="EMBL" id="CH471121">
    <property type="protein sequence ID" value="EAW52626.1"/>
    <property type="molecule type" value="Genomic_DNA"/>
</dbReference>
<dbReference type="EMBL" id="BC000170">
    <property type="protein sequence ID" value="AAH00170.1"/>
    <property type="molecule type" value="mRNA"/>
</dbReference>
<dbReference type="EMBL" id="BC001456">
    <property type="protein sequence ID" value="AAH01456.1"/>
    <property type="molecule type" value="mRNA"/>
</dbReference>
<dbReference type="EMBL" id="BC008868">
    <property type="protein sequence ID" value="AAH08868.1"/>
    <property type="molecule type" value="mRNA"/>
</dbReference>
<dbReference type="CCDS" id="CCDS1224.1">
    <molecule id="O75306-1"/>
</dbReference>
<dbReference type="CCDS" id="CCDS53404.1">
    <molecule id="O75306-2"/>
</dbReference>
<dbReference type="PIR" id="JE0193">
    <property type="entry name" value="JE0193"/>
</dbReference>
<dbReference type="RefSeq" id="NP_001159631.1">
    <molecule id="O75306-2"/>
    <property type="nucleotide sequence ID" value="NM_001166159.2"/>
</dbReference>
<dbReference type="RefSeq" id="NP_001364227.1">
    <molecule id="O75306-1"/>
    <property type="nucleotide sequence ID" value="NM_001377298.1"/>
</dbReference>
<dbReference type="RefSeq" id="NP_001364228.1">
    <molecule id="O75306-1"/>
    <property type="nucleotide sequence ID" value="NM_001377299.1"/>
</dbReference>
<dbReference type="RefSeq" id="NP_001364229.1">
    <molecule id="O75306-2"/>
    <property type="nucleotide sequence ID" value="NM_001377300.1"/>
</dbReference>
<dbReference type="RefSeq" id="NP_001364230.1">
    <molecule id="O75306-2"/>
    <property type="nucleotide sequence ID" value="NM_001377301.1"/>
</dbReference>
<dbReference type="RefSeq" id="NP_001364231.1">
    <molecule id="O75306-2"/>
    <property type="nucleotide sequence ID" value="NM_001377302.1"/>
</dbReference>
<dbReference type="RefSeq" id="NP_004541.1">
    <molecule id="O75306-1"/>
    <property type="nucleotide sequence ID" value="NM_004550.5"/>
</dbReference>
<dbReference type="RefSeq" id="XP_005245265.1">
    <property type="nucleotide sequence ID" value="XM_005245208.2"/>
</dbReference>
<dbReference type="RefSeq" id="XP_016856846.1">
    <property type="nucleotide sequence ID" value="XM_017001357.1"/>
</dbReference>
<dbReference type="PDB" id="5XTB">
    <property type="method" value="EM"/>
    <property type="resolution" value="3.40 A"/>
    <property type="chains" value="Q=79-463"/>
</dbReference>
<dbReference type="PDB" id="5XTC">
    <property type="method" value="EM"/>
    <property type="resolution" value="3.70 A"/>
    <property type="chains" value="Q=34-79"/>
</dbReference>
<dbReference type="PDB" id="5XTD">
    <property type="method" value="EM"/>
    <property type="resolution" value="3.70 A"/>
    <property type="chains" value="Q=34-463"/>
</dbReference>
<dbReference type="PDB" id="5XTH">
    <property type="method" value="EM"/>
    <property type="resolution" value="3.90 A"/>
    <property type="chains" value="Q=34-463"/>
</dbReference>
<dbReference type="PDB" id="5XTI">
    <property type="method" value="EM"/>
    <property type="resolution" value="17.40 A"/>
    <property type="chains" value="BQ/Q=34-463"/>
</dbReference>
<dbReference type="PDBsum" id="5XTB"/>
<dbReference type="PDBsum" id="5XTC"/>
<dbReference type="PDBsum" id="5XTD"/>
<dbReference type="PDBsum" id="5XTH"/>
<dbReference type="PDBsum" id="5XTI"/>
<dbReference type="SMR" id="O75306"/>
<dbReference type="BioGRID" id="110800">
    <property type="interactions" value="299"/>
</dbReference>
<dbReference type="ComplexPortal" id="CPX-577">
    <property type="entry name" value="Mitochondrial respiratory chain complex I"/>
</dbReference>
<dbReference type="CORUM" id="O75306"/>
<dbReference type="FunCoup" id="O75306">
    <property type="interactions" value="1810"/>
</dbReference>
<dbReference type="IntAct" id="O75306">
    <property type="interactions" value="105"/>
</dbReference>
<dbReference type="MINT" id="O75306"/>
<dbReference type="STRING" id="9606.ENSP00000356972"/>
<dbReference type="BindingDB" id="O75306"/>
<dbReference type="ChEMBL" id="CHEMBL3039"/>
<dbReference type="DrugBank" id="DB00997">
    <property type="generic name" value="Doxorubicin"/>
</dbReference>
<dbReference type="DrugBank" id="DB00157">
    <property type="generic name" value="NADH"/>
</dbReference>
<dbReference type="DrugCentral" id="O75306"/>
<dbReference type="GlyGen" id="O75306">
    <property type="glycosylation" value="1 site, 1 O-linked glycan (1 site)"/>
</dbReference>
<dbReference type="iPTMnet" id="O75306"/>
<dbReference type="PhosphoSitePlus" id="O75306"/>
<dbReference type="SwissPalm" id="O75306"/>
<dbReference type="BioMuta" id="NDUFS2"/>
<dbReference type="jPOST" id="O75306"/>
<dbReference type="MassIVE" id="O75306"/>
<dbReference type="PaxDb" id="9606-ENSP00000356972"/>
<dbReference type="PeptideAtlas" id="O75306"/>
<dbReference type="ProteomicsDB" id="49883">
    <molecule id="O75306-1"/>
</dbReference>
<dbReference type="Pumba" id="O75306"/>
<dbReference type="TopDownProteomics" id="O75306-1">
    <molecule id="O75306-1"/>
</dbReference>
<dbReference type="Antibodypedia" id="34301">
    <property type="antibodies" value="310 antibodies from 32 providers"/>
</dbReference>
<dbReference type="DNASU" id="4720"/>
<dbReference type="Ensembl" id="ENST00000367993.7">
    <molecule id="O75306-1"/>
    <property type="protein sequence ID" value="ENSP00000356972.3"/>
    <property type="gene ID" value="ENSG00000158864.13"/>
</dbReference>
<dbReference type="Ensembl" id="ENST00000392179.5">
    <molecule id="O75306-2"/>
    <property type="protein sequence ID" value="ENSP00000376018.4"/>
    <property type="gene ID" value="ENSG00000158864.13"/>
</dbReference>
<dbReference type="Ensembl" id="ENST00000676600.1">
    <molecule id="O75306-1"/>
    <property type="protein sequence ID" value="ENSP00000503989.1"/>
    <property type="gene ID" value="ENSG00000158864.13"/>
</dbReference>
<dbReference type="Ensembl" id="ENST00000676972.1">
    <molecule id="O75306-1"/>
    <property type="protein sequence ID" value="ENSP00000503117.1"/>
    <property type="gene ID" value="ENSG00000158864.13"/>
</dbReference>
<dbReference type="Ensembl" id="ENST00000677457.1">
    <molecule id="O75306-2"/>
    <property type="protein sequence ID" value="ENSP00000503294.1"/>
    <property type="gene ID" value="ENSG00000158864.13"/>
</dbReference>
<dbReference type="Ensembl" id="ENST00000677550.1">
    <molecule id="O75306-2"/>
    <property type="protein sequence ID" value="ENSP00000503353.1"/>
    <property type="gene ID" value="ENSG00000158864.13"/>
</dbReference>
<dbReference type="Ensembl" id="ENST00000678507.1">
    <molecule id="O75306-1"/>
    <property type="protein sequence ID" value="ENSP00000504199.1"/>
    <property type="gene ID" value="ENSG00000158864.13"/>
</dbReference>
<dbReference type="Ensembl" id="ENST00000678511.1">
    <molecule id="O75306-1"/>
    <property type="protein sequence ID" value="ENSP00000504846.1"/>
    <property type="gene ID" value="ENSG00000158864.13"/>
</dbReference>
<dbReference type="Ensembl" id="ENST00000678605.1">
    <molecule id="O75306-2"/>
    <property type="protein sequence ID" value="ENSP00000503969.1"/>
    <property type="gene ID" value="ENSG00000158864.13"/>
</dbReference>
<dbReference type="Ensembl" id="ENST00000679176.1">
    <molecule id="O75306-2"/>
    <property type="protein sequence ID" value="ENSP00000504170.1"/>
    <property type="gene ID" value="ENSG00000158864.13"/>
</dbReference>
<dbReference type="GeneID" id="4720"/>
<dbReference type="KEGG" id="hsa:4720"/>
<dbReference type="MANE-Select" id="ENST00000676972.1">
    <property type="protein sequence ID" value="ENSP00000503117.1"/>
    <property type="RefSeq nucleotide sequence ID" value="NM_001377299.1"/>
    <property type="RefSeq protein sequence ID" value="NP_001364228.1"/>
</dbReference>
<dbReference type="UCSC" id="uc001fyv.4">
    <molecule id="O75306-1"/>
    <property type="organism name" value="human"/>
</dbReference>
<dbReference type="AGR" id="HGNC:7708"/>
<dbReference type="CTD" id="4720"/>
<dbReference type="DisGeNET" id="4720"/>
<dbReference type="GeneCards" id="NDUFS2"/>
<dbReference type="HGNC" id="HGNC:7708">
    <property type="gene designation" value="NDUFS2"/>
</dbReference>
<dbReference type="HPA" id="ENSG00000158864">
    <property type="expression patterns" value="Tissue enhanced (skeletal muscle, tongue)"/>
</dbReference>
<dbReference type="MalaCards" id="NDUFS2"/>
<dbReference type="MIM" id="602985">
    <property type="type" value="gene"/>
</dbReference>
<dbReference type="MIM" id="618228">
    <property type="type" value="phenotype"/>
</dbReference>
<dbReference type="MIM" id="620569">
    <property type="type" value="phenotype"/>
</dbReference>
<dbReference type="neXtProt" id="NX_O75306"/>
<dbReference type="OpenTargets" id="ENSG00000158864"/>
<dbReference type="Orphanet" id="2609">
    <property type="disease" value="Isolated complex I deficiency"/>
</dbReference>
<dbReference type="Orphanet" id="104">
    <property type="disease" value="Leber hereditary optic neuropathy"/>
</dbReference>
<dbReference type="PharmGKB" id="PA31519"/>
<dbReference type="VEuPathDB" id="HostDB:ENSG00000158864"/>
<dbReference type="eggNOG" id="KOG2870">
    <property type="taxonomic scope" value="Eukaryota"/>
</dbReference>
<dbReference type="GeneTree" id="ENSGT00390000009529"/>
<dbReference type="HOGENOM" id="CLU_015134_1_1_1"/>
<dbReference type="InParanoid" id="O75306"/>
<dbReference type="OMA" id="TRMDYLT"/>
<dbReference type="OrthoDB" id="1009at2759"/>
<dbReference type="PAN-GO" id="O75306">
    <property type="GO annotations" value="2 GO annotations based on evolutionary models"/>
</dbReference>
<dbReference type="PhylomeDB" id="O75306"/>
<dbReference type="TreeFam" id="TF300370"/>
<dbReference type="BioCyc" id="MetaCyc:HS08339-MONOMER"/>
<dbReference type="PathwayCommons" id="O75306"/>
<dbReference type="Reactome" id="R-HSA-611105">
    <property type="pathway name" value="Respiratory electron transport"/>
</dbReference>
<dbReference type="Reactome" id="R-HSA-6799198">
    <property type="pathway name" value="Complex I biogenesis"/>
</dbReference>
<dbReference type="SignaLink" id="O75306"/>
<dbReference type="SIGNOR" id="O75306"/>
<dbReference type="BioGRID-ORCS" id="4720">
    <property type="hits" value="352 hits in 1168 CRISPR screens"/>
</dbReference>
<dbReference type="CD-CODE" id="FB4E32DD">
    <property type="entry name" value="Presynaptic clusters and postsynaptic densities"/>
</dbReference>
<dbReference type="ChiTaRS" id="NDUFS2">
    <property type="organism name" value="human"/>
</dbReference>
<dbReference type="GeneWiki" id="NDUFS2"/>
<dbReference type="GenomeRNAi" id="4720"/>
<dbReference type="Pharos" id="O75306">
    <property type="development level" value="Tclin"/>
</dbReference>
<dbReference type="PRO" id="PR:O75306"/>
<dbReference type="Proteomes" id="UP000005640">
    <property type="component" value="Chromosome 1"/>
</dbReference>
<dbReference type="RNAct" id="O75306">
    <property type="molecule type" value="protein"/>
</dbReference>
<dbReference type="Bgee" id="ENSG00000158864">
    <property type="expression patterns" value="Expressed in apex of heart and 204 other cell types or tissues"/>
</dbReference>
<dbReference type="GO" id="GO:0005743">
    <property type="term" value="C:mitochondrial inner membrane"/>
    <property type="evidence" value="ECO:0000314"/>
    <property type="project" value="ComplexPortal"/>
</dbReference>
<dbReference type="GO" id="GO:0005759">
    <property type="term" value="C:mitochondrial matrix"/>
    <property type="evidence" value="ECO:0000304"/>
    <property type="project" value="Reactome"/>
</dbReference>
<dbReference type="GO" id="GO:0005739">
    <property type="term" value="C:mitochondrion"/>
    <property type="evidence" value="ECO:0000314"/>
    <property type="project" value="UniProtKB"/>
</dbReference>
<dbReference type="GO" id="GO:0045271">
    <property type="term" value="C:respiratory chain complex I"/>
    <property type="evidence" value="ECO:0000314"/>
    <property type="project" value="UniProtKB"/>
</dbReference>
<dbReference type="GO" id="GO:0051539">
    <property type="term" value="F:4 iron, 4 sulfur cluster binding"/>
    <property type="evidence" value="ECO:0007669"/>
    <property type="project" value="UniProtKB-KW"/>
</dbReference>
<dbReference type="GO" id="GO:0009055">
    <property type="term" value="F:electron transfer activity"/>
    <property type="evidence" value="ECO:0000303"/>
    <property type="project" value="UniProtKB"/>
</dbReference>
<dbReference type="GO" id="GO:0046872">
    <property type="term" value="F:metal ion binding"/>
    <property type="evidence" value="ECO:0007669"/>
    <property type="project" value="UniProtKB-KW"/>
</dbReference>
<dbReference type="GO" id="GO:0051287">
    <property type="term" value="F:NAD binding"/>
    <property type="evidence" value="ECO:0007669"/>
    <property type="project" value="InterPro"/>
</dbReference>
<dbReference type="GO" id="GO:0008137">
    <property type="term" value="F:NADH dehydrogenase (ubiquinone) activity"/>
    <property type="evidence" value="ECO:0000315"/>
    <property type="project" value="UniProtKB"/>
</dbReference>
<dbReference type="GO" id="GO:0019826">
    <property type="term" value="F:oxygen sensor activity"/>
    <property type="evidence" value="ECO:0000315"/>
    <property type="project" value="UniProtKB"/>
</dbReference>
<dbReference type="GO" id="GO:0048038">
    <property type="term" value="F:quinone binding"/>
    <property type="evidence" value="ECO:0007669"/>
    <property type="project" value="InterPro"/>
</dbReference>
<dbReference type="GO" id="GO:0031625">
    <property type="term" value="F:ubiquitin protein ligase binding"/>
    <property type="evidence" value="ECO:0000353"/>
    <property type="project" value="ParkinsonsUK-UCL"/>
</dbReference>
<dbReference type="GO" id="GO:0009060">
    <property type="term" value="P:aerobic respiration"/>
    <property type="evidence" value="ECO:0000303"/>
    <property type="project" value="ComplexPortal"/>
</dbReference>
<dbReference type="GO" id="GO:0071453">
    <property type="term" value="P:cellular response to oxygen levels"/>
    <property type="evidence" value="ECO:0000315"/>
    <property type="project" value="UniProtKB"/>
</dbReference>
<dbReference type="GO" id="GO:0042063">
    <property type="term" value="P:gliogenesis"/>
    <property type="evidence" value="ECO:0000250"/>
    <property type="project" value="UniProtKB"/>
</dbReference>
<dbReference type="GO" id="GO:0042775">
    <property type="term" value="P:mitochondrial ATP synthesis coupled electron transport"/>
    <property type="evidence" value="ECO:0000315"/>
    <property type="project" value="CAFA"/>
</dbReference>
<dbReference type="GO" id="GO:0006120">
    <property type="term" value="P:mitochondrial electron transport, NADH to ubiquinone"/>
    <property type="evidence" value="ECO:0000315"/>
    <property type="project" value="UniProtKB"/>
</dbReference>
<dbReference type="GO" id="GO:0032981">
    <property type="term" value="P:mitochondrial respiratory chain complex I assembly"/>
    <property type="evidence" value="ECO:0000250"/>
    <property type="project" value="UniProtKB"/>
</dbReference>
<dbReference type="GO" id="GO:0061351">
    <property type="term" value="P:neural precursor cell proliferation"/>
    <property type="evidence" value="ECO:0000250"/>
    <property type="project" value="UniProtKB"/>
</dbReference>
<dbReference type="GO" id="GO:0022008">
    <property type="term" value="P:neurogenesis"/>
    <property type="evidence" value="ECO:0000250"/>
    <property type="project" value="UniProtKB"/>
</dbReference>
<dbReference type="GO" id="GO:0042776">
    <property type="term" value="P:proton motive force-driven mitochondrial ATP synthesis"/>
    <property type="evidence" value="ECO:0000303"/>
    <property type="project" value="ComplexPortal"/>
</dbReference>
<dbReference type="FunFam" id="1.10.645.10:FF:000005">
    <property type="entry name" value="NADH-quinone oxidoreductase subunit D"/>
    <property type="match status" value="1"/>
</dbReference>
<dbReference type="Gene3D" id="1.10.645.10">
    <property type="entry name" value="Cytochrome-c3 Hydrogenase, chain B"/>
    <property type="match status" value="1"/>
</dbReference>
<dbReference type="HAMAP" id="MF_01358">
    <property type="entry name" value="NDH1_NuoD"/>
    <property type="match status" value="1"/>
</dbReference>
<dbReference type="InterPro" id="IPR001135">
    <property type="entry name" value="NADH_Q_OxRdtase_suD"/>
</dbReference>
<dbReference type="InterPro" id="IPR014029">
    <property type="entry name" value="NADH_UbQ_OxRdtase_49kDa_CS"/>
</dbReference>
<dbReference type="InterPro" id="IPR022885">
    <property type="entry name" value="NDH1_su_D/H"/>
</dbReference>
<dbReference type="InterPro" id="IPR029014">
    <property type="entry name" value="NiFe-Hase_large"/>
</dbReference>
<dbReference type="NCBIfam" id="TIGR01962">
    <property type="entry name" value="NuoD"/>
    <property type="match status" value="1"/>
</dbReference>
<dbReference type="NCBIfam" id="NF004739">
    <property type="entry name" value="PRK06075.1"/>
    <property type="match status" value="1"/>
</dbReference>
<dbReference type="PANTHER" id="PTHR11993:SF10">
    <property type="entry name" value="NADH DEHYDROGENASE [UBIQUINONE] IRON-SULFUR PROTEIN 2, MITOCHONDRIAL"/>
    <property type="match status" value="1"/>
</dbReference>
<dbReference type="PANTHER" id="PTHR11993">
    <property type="entry name" value="NADH-UBIQUINONE OXIDOREDUCTASE 49 KDA SUBUNIT"/>
    <property type="match status" value="1"/>
</dbReference>
<dbReference type="Pfam" id="PF00346">
    <property type="entry name" value="Complex1_49kDa"/>
    <property type="match status" value="1"/>
</dbReference>
<dbReference type="SUPFAM" id="SSF56762">
    <property type="entry name" value="HydB/Nqo4-like"/>
    <property type="match status" value="1"/>
</dbReference>
<dbReference type="PROSITE" id="PS00535">
    <property type="entry name" value="COMPLEX1_49K"/>
    <property type="match status" value="1"/>
</dbReference>
<feature type="transit peptide" description="Mitochondrion" evidence="1">
    <location>
        <begin position="1"/>
        <end position="33"/>
    </location>
</feature>
<feature type="chain" id="PRO_0000019981" description="NADH dehydrogenase [ubiquinone] iron-sulfur protein 2, mitochondrial">
    <location>
        <begin position="34"/>
        <end position="463"/>
    </location>
</feature>
<feature type="binding site" evidence="4">
    <location>
        <position position="326"/>
    </location>
    <ligand>
        <name>[4Fe-4S] cluster</name>
        <dbReference type="ChEBI" id="CHEBI:49883"/>
    </ligand>
</feature>
<feature type="binding site" evidence="4">
    <location>
        <position position="332"/>
    </location>
    <ligand>
        <name>[4Fe-4S] cluster</name>
        <dbReference type="ChEBI" id="CHEBI:49883"/>
    </ligand>
</feature>
<feature type="binding site" evidence="4">
    <location>
        <position position="347"/>
    </location>
    <ligand>
        <name>[4Fe-4S] cluster</name>
        <dbReference type="ChEBI" id="CHEBI:49883"/>
    </ligand>
</feature>
<feature type="modified residue" description="N6-acetyllysine" evidence="3">
    <location>
        <position position="62"/>
    </location>
</feature>
<feature type="modified residue" description="Symmetric dimethylarginine" evidence="11 12">
    <location>
        <position position="118"/>
    </location>
</feature>
<feature type="splice variant" id="VSP_046466" description="In isoform 2." evidence="15">
    <original>QDIVFGEVDR</original>
    <variation>RPIV</variation>
    <location>
        <begin position="454"/>
        <end position="463"/>
    </location>
</feature>
<feature type="sequence variant" id="VAR_034150" description="In dbSNP:rs11538340.">
    <original>P</original>
    <variation>T</variation>
    <location>
        <position position="20"/>
    </location>
</feature>
<feature type="sequence variant" id="VAR_089158" description="In LHONAR2; likely pathogenic; functional testing in a yeast model shows decreased NADH dehydrogenase (ubiquinone) activity." evidence="13">
    <original>Y</original>
    <variation>C</variation>
    <location>
        <position position="53"/>
    </location>
</feature>
<feature type="sequence variant" id="VAR_071891" evidence="9">
    <original>A</original>
    <variation>V</variation>
    <location>
        <position position="224"/>
    </location>
</feature>
<feature type="sequence variant" id="VAR_019535" description="In MC1DN6; dbSNP:rs121434427." evidence="5">
    <original>R</original>
    <variation>Q</variation>
    <location>
        <position position="228"/>
    </location>
</feature>
<feature type="sequence variant" id="VAR_034151" description="In dbSNP:rs16827493.">
    <original>P</original>
    <variation>A</variation>
    <location>
        <position position="229"/>
    </location>
</feature>
<feature type="sequence variant" id="VAR_019536" description="In MC1DN6; dbSNP:rs121434428." evidence="5">
    <original>P</original>
    <variation>Q</variation>
    <location>
        <position position="229"/>
    </location>
</feature>
<feature type="sequence variant" id="VAR_089159" description="In LHONAR2; likely pathogenic; functional testing in a yeast model shows decreased NADH dehydrogenase (ubiquinone) activity." evidence="13">
    <original>Y</original>
    <variation>C</variation>
    <location>
        <position position="308"/>
    </location>
</feature>
<feature type="sequence variant" id="VAR_034152" description="In dbSNP:rs11576415.">
    <original>P</original>
    <variation>A</variation>
    <location>
        <position position="352"/>
    </location>
</feature>
<feature type="sequence variant" id="VAR_019537" description="In MC1DN6; dbSNP:rs121434429." evidence="5">
    <original>S</original>
    <variation>P</variation>
    <location>
        <position position="413"/>
    </location>
</feature>
<feature type="sequence variant" id="VAR_084193" description="In MC1DN6; loss of catalytic activity; no change in Km value for ubiquinone-1." evidence="10">
    <original>D</original>
    <variation>N</variation>
    <location>
        <position position="446"/>
    </location>
</feature>
<feature type="sequence conflict" description="In Ref. 2; AAC34362." evidence="15" ref="2">
    <original>V</original>
    <variation>G</variation>
    <location>
        <position position="24"/>
    </location>
</feature>
<feature type="strand" evidence="18">
    <location>
        <begin position="80"/>
        <end position="82"/>
    </location>
</feature>
<feature type="strand" evidence="18">
    <location>
        <begin position="86"/>
        <end position="88"/>
    </location>
</feature>
<feature type="turn" evidence="18">
    <location>
        <begin position="89"/>
        <end position="94"/>
    </location>
</feature>
<feature type="strand" evidence="18">
    <location>
        <begin position="96"/>
        <end position="105"/>
    </location>
</feature>
<feature type="strand" evidence="18">
    <location>
        <begin position="107"/>
        <end position="112"/>
    </location>
</feature>
<feature type="helix" evidence="18">
    <location>
        <begin position="120"/>
        <end position="125"/>
    </location>
</feature>
<feature type="helix" evidence="18">
    <location>
        <begin position="129"/>
        <end position="132"/>
    </location>
</feature>
<feature type="helix" evidence="18">
    <location>
        <begin position="134"/>
        <end position="137"/>
    </location>
</feature>
<feature type="strand" evidence="18">
    <location>
        <begin position="140"/>
        <end position="142"/>
    </location>
</feature>
<feature type="helix" evidence="18">
    <location>
        <begin position="145"/>
        <end position="158"/>
    </location>
</feature>
<feature type="helix" evidence="18">
    <location>
        <begin position="165"/>
        <end position="193"/>
    </location>
</feature>
<feature type="helix" evidence="18">
    <location>
        <begin position="198"/>
        <end position="218"/>
    </location>
</feature>
<feature type="strand" evidence="18">
    <location>
        <begin position="219"/>
        <end position="223"/>
    </location>
</feature>
<feature type="strand" evidence="18">
    <location>
        <begin position="231"/>
        <end position="234"/>
    </location>
</feature>
<feature type="helix" evidence="18">
    <location>
        <begin position="240"/>
        <end position="249"/>
    </location>
</feature>
<feature type="helix" evidence="18">
    <location>
        <begin position="251"/>
        <end position="259"/>
    </location>
</feature>
<feature type="turn" evidence="18">
    <location>
        <begin position="260"/>
        <end position="264"/>
    </location>
</feature>
<feature type="helix" evidence="18">
    <location>
        <begin position="266"/>
        <end position="272"/>
    </location>
</feature>
<feature type="helix" evidence="18">
    <location>
        <begin position="280"/>
        <end position="286"/>
    </location>
</feature>
<feature type="helix" evidence="18">
    <location>
        <begin position="291"/>
        <end position="294"/>
    </location>
</feature>
<feature type="turn" evidence="18">
    <location>
        <begin position="295"/>
        <end position="297"/>
    </location>
</feature>
<feature type="helix" evidence="18">
    <location>
        <begin position="310"/>
        <end position="312"/>
    </location>
</feature>
<feature type="strand" evidence="18">
    <location>
        <begin position="318"/>
        <end position="320"/>
    </location>
</feature>
<feature type="helix" evidence="18">
    <location>
        <begin position="326"/>
        <end position="349"/>
    </location>
</feature>
<feature type="turn" evidence="18">
    <location>
        <begin position="361"/>
        <end position="363"/>
    </location>
</feature>
<feature type="helix" evidence="18">
    <location>
        <begin position="368"/>
        <end position="371"/>
    </location>
</feature>
<feature type="helix" evidence="18">
    <location>
        <begin position="375"/>
        <end position="384"/>
    </location>
</feature>
<feature type="turn" evidence="18">
    <location>
        <begin position="385"/>
        <end position="387"/>
    </location>
</feature>
<feature type="strand" evidence="18">
    <location>
        <begin position="393"/>
        <end position="402"/>
    </location>
</feature>
<feature type="strand" evidence="18">
    <location>
        <begin position="405"/>
        <end position="413"/>
    </location>
</feature>
<feature type="strand" evidence="18">
    <location>
        <begin position="415"/>
        <end position="423"/>
    </location>
</feature>
<feature type="helix" evidence="18">
    <location>
        <begin position="427"/>
        <end position="439"/>
    </location>
</feature>
<feature type="helix" evidence="18">
    <location>
        <begin position="444"/>
        <end position="453"/>
    </location>
</feature>
<feature type="helix" evidence="18">
    <location>
        <begin position="458"/>
        <end position="461"/>
    </location>
</feature>
<organism>
    <name type="scientific">Homo sapiens</name>
    <name type="common">Human</name>
    <dbReference type="NCBI Taxonomy" id="9606"/>
    <lineage>
        <taxon>Eukaryota</taxon>
        <taxon>Metazoa</taxon>
        <taxon>Chordata</taxon>
        <taxon>Craniata</taxon>
        <taxon>Vertebrata</taxon>
        <taxon>Euteleostomi</taxon>
        <taxon>Mammalia</taxon>
        <taxon>Eutheria</taxon>
        <taxon>Euarchontoglires</taxon>
        <taxon>Primates</taxon>
        <taxon>Haplorrhini</taxon>
        <taxon>Catarrhini</taxon>
        <taxon>Hominidae</taxon>
        <taxon>Homo</taxon>
    </lineage>
</organism>
<evidence type="ECO:0000250" key="1">
    <source>
        <dbReference type="UniProtKB" id="P17694"/>
    </source>
</evidence>
<evidence type="ECO:0000250" key="2">
    <source>
        <dbReference type="UniProtKB" id="Q641Y2"/>
    </source>
</evidence>
<evidence type="ECO:0000250" key="3">
    <source>
        <dbReference type="UniProtKB" id="Q91WD5"/>
    </source>
</evidence>
<evidence type="ECO:0000255" key="4"/>
<evidence type="ECO:0000269" key="5">
    <source>
    </source>
</evidence>
<evidence type="ECO:0000269" key="6">
    <source>
    </source>
</evidence>
<evidence type="ECO:0000269" key="7">
    <source>
    </source>
</evidence>
<evidence type="ECO:0000269" key="8">
    <source>
    </source>
</evidence>
<evidence type="ECO:0000269" key="9">
    <source>
    </source>
</evidence>
<evidence type="ECO:0000269" key="10">
    <source>
    </source>
</evidence>
<evidence type="ECO:0000269" key="11">
    <source>
    </source>
</evidence>
<evidence type="ECO:0000269" key="12">
    <source>
    </source>
</evidence>
<evidence type="ECO:0000269" key="13">
    <source>
    </source>
</evidence>
<evidence type="ECO:0000269" key="14">
    <source>
    </source>
</evidence>
<evidence type="ECO:0000305" key="15"/>
<evidence type="ECO:0000305" key="16">
    <source>
    </source>
</evidence>
<evidence type="ECO:0000305" key="17">
    <source>
    </source>
</evidence>
<evidence type="ECO:0007829" key="18">
    <source>
        <dbReference type="PDB" id="5XTB"/>
    </source>
</evidence>
<accession>O75306</accession>
<accession>D3DVG7</accession>
<accession>J3KPM7</accession>
<accession>Q5VTW0</accession>
<accession>Q969P3</accession>
<accession>Q9UEV3</accession>